<accession>P0C8Z8</accession>
<accession>D5CVK0</accession>
<accession>D7RNS2</accession>
<accession>Q9AME1</accession>
<sequence length="195" mass="20081">MKKKVLAIALVTVFTGTGVAQAADVTAQAVATWSATAKKDTTSKLVVTPLGSLAFQYAEGIKGFNSQKGLFDVAIEGDSTATAFKLTSRLITNTLTQLDTSGSTLNVGVDYNGAAVEKTGDTVMIDTANGVLGGNLSPLANGYNASNRTTAQDGFTFSIISGTTNGTTAVTDYSTLPEGIWSGDVSVQFDATWTS</sequence>
<organism>
    <name type="scientific">Escherichia coli O18:K1:H7 (strain IHE3034 / ExPEC)</name>
    <dbReference type="NCBI Taxonomy" id="714962"/>
    <lineage>
        <taxon>Bacteria</taxon>
        <taxon>Pseudomonadati</taxon>
        <taxon>Pseudomonadota</taxon>
        <taxon>Gammaproteobacteria</taxon>
        <taxon>Enterobacterales</taxon>
        <taxon>Enterobacteriaceae</taxon>
        <taxon>Escherichia</taxon>
    </lineage>
</organism>
<reference key="1">
    <citation type="journal article" date="2001" name="J. Bacteriol.">
        <title>matB, a common fimbrillin gene of Escherichia coli, expressed in a genetically conserved, virulent clonal group.</title>
        <authorList>
            <person name="Pouttu R."/>
            <person name="Westerlund-Wikstrom B."/>
            <person name="Lang H."/>
            <person name="Alsti K."/>
            <person name="Virkola R."/>
            <person name="Saarela U."/>
            <person name="Siitonen A."/>
            <person name="Kalkkinen N."/>
            <person name="Korhonen T.K."/>
        </authorList>
    </citation>
    <scope>NUCLEOTIDE SEQUENCE [GENOMIC DNA]</scope>
    <scope>PROTEIN SEQUENCE OF 23-62 AND 69-85</scope>
    <scope>FUNCTION</scope>
    <scope>INDUCTION</scope>
    <scope>DISRUPTION PHENOTYPE</scope>
    <source>
        <strain>IHE3034 / ExPEC</strain>
    </source>
</reference>
<reference key="2">
    <citation type="journal article" date="2010" name="Microbiology">
        <title>Mat fimbriae promote biofilm formation by meningitis-associated Escherichia coli.</title>
        <authorList>
            <person name="Lehti T.A."/>
            <person name="Bauchart P."/>
            <person name="Heikkinen J."/>
            <person name="Hacker J."/>
            <person name="Korhonen T.K."/>
            <person name="Dobrindt U."/>
            <person name="Westerlund-Wikstrom B."/>
        </authorList>
    </citation>
    <scope>NUCLEOTIDE SEQUENCE [GENOMIC DNA]</scope>
    <scope>FUNCTION</scope>
    <scope>DISRUPTION PHENOTYPE</scope>
    <source>
        <strain>IHE3034 / ExPEC</strain>
    </source>
</reference>
<reference key="3">
    <citation type="journal article" date="2010" name="Proc. Natl. Acad. Sci. U.S.A.">
        <title>Identification of protective and broadly conserved vaccine antigens from the genome of extraintestinal pathogenic Escherichia coli.</title>
        <authorList>
            <person name="Moriel D.G."/>
            <person name="Bertoldi I."/>
            <person name="Spagnuolo A."/>
            <person name="Marchi S."/>
            <person name="Rosini R."/>
            <person name="Nesta B."/>
            <person name="Pastorello I."/>
            <person name="Corea V.A."/>
            <person name="Torricelli G."/>
            <person name="Cartocci E."/>
            <person name="Savino S."/>
            <person name="Scarselli M."/>
            <person name="Dobrindt U."/>
            <person name="Hacker J."/>
            <person name="Tettelin H."/>
            <person name="Tallon L.J."/>
            <person name="Sullivan S."/>
            <person name="Wieler L.H."/>
            <person name="Ewers C."/>
            <person name="Pickard D."/>
            <person name="Dougan G."/>
            <person name="Fontana M.R."/>
            <person name="Rappuoli R."/>
            <person name="Pizza M."/>
            <person name="Serino L."/>
        </authorList>
    </citation>
    <scope>NUCLEOTIDE SEQUENCE [LARGE SCALE GENOMIC DNA]</scope>
    <source>
        <strain>IHE3034 / ExPEC</strain>
    </source>
</reference>
<keyword id="KW-0903">Direct protein sequencing</keyword>
<keyword id="KW-0281">Fimbrium</keyword>
<keyword id="KW-0732">Signal</keyword>
<dbReference type="EMBL" id="AF325731">
    <property type="protein sequence ID" value="AAK01671.1"/>
    <property type="molecule type" value="Genomic_DNA"/>
</dbReference>
<dbReference type="EMBL" id="HM102365">
    <property type="protein sequence ID" value="ADI59488.1"/>
    <property type="molecule type" value="Genomic_DNA"/>
</dbReference>
<dbReference type="EMBL" id="CP001969">
    <property type="protein sequence ID" value="ADE92295.1"/>
    <property type="molecule type" value="Genomic_DNA"/>
</dbReference>
<dbReference type="RefSeq" id="WP_000730982.1">
    <property type="nucleotide sequence ID" value="NC_017628.1"/>
</dbReference>
<dbReference type="SMR" id="P0C8Z8"/>
<dbReference type="KEGG" id="eih:ECOK1_0280"/>
<dbReference type="PATRIC" id="fig|714962.3.peg.280"/>
<dbReference type="HOGENOM" id="CLU_120328_0_0_6"/>
<dbReference type="GO" id="GO:0009289">
    <property type="term" value="C:pilus"/>
    <property type="evidence" value="ECO:0007669"/>
    <property type="project" value="UniProtKB-SubCell"/>
</dbReference>
<dbReference type="Gene3D" id="2.60.40.3290">
    <property type="entry name" value="Fimbrial protein EcpA"/>
    <property type="match status" value="1"/>
</dbReference>
<dbReference type="InterPro" id="IPR016514">
    <property type="entry name" value="EcpA"/>
</dbReference>
<dbReference type="InterPro" id="IPR038478">
    <property type="entry name" value="Fimbrillin_EcpA_sf"/>
</dbReference>
<dbReference type="Pfam" id="PF16449">
    <property type="entry name" value="MatB"/>
    <property type="match status" value="1"/>
</dbReference>
<dbReference type="PIRSF" id="PIRSF007320">
    <property type="entry name" value="Fimbrillin_MatB"/>
    <property type="match status" value="1"/>
</dbReference>
<protein>
    <recommendedName>
        <fullName>Common pilus major fimbrillin subunit EcpA</fullName>
    </recommendedName>
    <alternativeName>
        <fullName>MatB fimbrillin</fullName>
    </alternativeName>
    <alternativeName>
        <fullName>Meningitis associated and temperature regulated protein B</fullName>
    </alternativeName>
</protein>
<feature type="signal peptide" evidence="2">
    <location>
        <begin position="1"/>
        <end position="22"/>
    </location>
</feature>
<feature type="chain" id="PRO_0000367920" description="Common pilus major fimbrillin subunit EcpA">
    <location>
        <begin position="23"/>
        <end position="195"/>
    </location>
</feature>
<evidence type="ECO:0000250" key="1"/>
<evidence type="ECO:0000269" key="2">
    <source>
    </source>
</evidence>
<evidence type="ECO:0000269" key="3">
    <source>
    </source>
</evidence>
<evidence type="ECO:0000305" key="4"/>
<proteinExistence type="evidence at protein level"/>
<gene>
    <name type="primary">ecpA</name>
    <name type="synonym">matB</name>
    <name type="ordered locus">ECOK1_0280</name>
</gene>
<name>ECPA_ECOKI</name>
<comment type="function">
    <text evidence="2 3">Part of the ecpRABCDE operon, which encodes the E.coli common pilus (ECP). ECP is found in both commensal and pathogenic strains and plays a dual role in early-stage biofilm development and host cell recognition. Major subunit of the fimbria.</text>
</comment>
<comment type="subunit">
    <text evidence="1">Self-associates. Forms filaments. Interacts with EcpD (By similarity).</text>
</comment>
<comment type="subcellular location">
    <subcellularLocation>
        <location evidence="1">Fimbrium</location>
    </subcellularLocation>
</comment>
<comment type="induction">
    <text evidence="1 2">Negatively regulated by H-NS. Positively regulated by IHF and EcpR (By similarity). Induced by low temperature.</text>
</comment>
<comment type="disruption phenotype">
    <text evidence="2 3">Mutants do not express ECP and are defective in biofilm formation.</text>
</comment>
<comment type="similarity">
    <text evidence="4">Belongs to the EcpA/MatB fimbrillin family.</text>
</comment>